<accession>B1VS15</accession>
<reference key="1">
    <citation type="journal article" date="2008" name="J. Bacteriol.">
        <title>Genome sequence of the streptomycin-producing microorganism Streptomyces griseus IFO 13350.</title>
        <authorList>
            <person name="Ohnishi Y."/>
            <person name="Ishikawa J."/>
            <person name="Hara H."/>
            <person name="Suzuki H."/>
            <person name="Ikenoya M."/>
            <person name="Ikeda H."/>
            <person name="Yamashita A."/>
            <person name="Hattori M."/>
            <person name="Horinouchi S."/>
        </authorList>
    </citation>
    <scope>NUCLEOTIDE SEQUENCE [LARGE SCALE GENOMIC DNA]</scope>
    <source>
        <strain>JCM 4626 / CBS 651.72 / NBRC 13350 / KCC S-0626 / ISP 5235</strain>
    </source>
</reference>
<name>MSHD_STRGG</name>
<dbReference type="EC" id="2.3.1.189" evidence="1"/>
<dbReference type="EMBL" id="AP009493">
    <property type="protein sequence ID" value="BAG20769.1"/>
    <property type="molecule type" value="Genomic_DNA"/>
</dbReference>
<dbReference type="RefSeq" id="WP_012380250.1">
    <property type="nucleotide sequence ID" value="NC_010572.1"/>
</dbReference>
<dbReference type="SMR" id="B1VS15"/>
<dbReference type="KEGG" id="sgr:SGR_3940"/>
<dbReference type="PATRIC" id="fig|455632.4.peg.4011"/>
<dbReference type="eggNOG" id="COG0456">
    <property type="taxonomic scope" value="Bacteria"/>
</dbReference>
<dbReference type="HOGENOM" id="CLU_068014_0_0_11"/>
<dbReference type="Proteomes" id="UP000001685">
    <property type="component" value="Chromosome"/>
</dbReference>
<dbReference type="GO" id="GO:0035447">
    <property type="term" value="F:mycothiol synthase activity"/>
    <property type="evidence" value="ECO:0007669"/>
    <property type="project" value="UniProtKB-UniRule"/>
</dbReference>
<dbReference type="GO" id="GO:0010125">
    <property type="term" value="P:mycothiol biosynthetic process"/>
    <property type="evidence" value="ECO:0007669"/>
    <property type="project" value="UniProtKB-UniRule"/>
</dbReference>
<dbReference type="CDD" id="cd04301">
    <property type="entry name" value="NAT_SF"/>
    <property type="match status" value="1"/>
</dbReference>
<dbReference type="Gene3D" id="3.40.630.30">
    <property type="match status" value="1"/>
</dbReference>
<dbReference type="HAMAP" id="MF_01698">
    <property type="entry name" value="MshD"/>
    <property type="match status" value="1"/>
</dbReference>
<dbReference type="InterPro" id="IPR016181">
    <property type="entry name" value="Acyl_CoA_acyltransferase"/>
</dbReference>
<dbReference type="InterPro" id="IPR050832">
    <property type="entry name" value="Bact_Acetyltransf"/>
</dbReference>
<dbReference type="InterPro" id="IPR000182">
    <property type="entry name" value="GNAT_dom"/>
</dbReference>
<dbReference type="InterPro" id="IPR017813">
    <property type="entry name" value="Mycothiol_AcTrfase"/>
</dbReference>
<dbReference type="NCBIfam" id="TIGR03448">
    <property type="entry name" value="mycothiol_MshD"/>
    <property type="match status" value="1"/>
</dbReference>
<dbReference type="PANTHER" id="PTHR43877:SF2">
    <property type="entry name" value="AMINOALKYLPHOSPHONATE N-ACETYLTRANSFERASE-RELATED"/>
    <property type="match status" value="1"/>
</dbReference>
<dbReference type="PANTHER" id="PTHR43877">
    <property type="entry name" value="AMINOALKYLPHOSPHONATE N-ACETYLTRANSFERASE-RELATED-RELATED"/>
    <property type="match status" value="1"/>
</dbReference>
<dbReference type="Pfam" id="PF00583">
    <property type="entry name" value="Acetyltransf_1"/>
    <property type="match status" value="1"/>
</dbReference>
<dbReference type="Pfam" id="PF13508">
    <property type="entry name" value="Acetyltransf_7"/>
    <property type="match status" value="1"/>
</dbReference>
<dbReference type="PIRSF" id="PIRSF021524">
    <property type="entry name" value="MSH_acetyltransferase"/>
    <property type="match status" value="1"/>
</dbReference>
<dbReference type="SUPFAM" id="SSF55729">
    <property type="entry name" value="Acyl-CoA N-acyltransferases (Nat)"/>
    <property type="match status" value="1"/>
</dbReference>
<dbReference type="PROSITE" id="PS51186">
    <property type="entry name" value="GNAT"/>
    <property type="match status" value="2"/>
</dbReference>
<evidence type="ECO:0000255" key="1">
    <source>
        <dbReference type="HAMAP-Rule" id="MF_01698"/>
    </source>
</evidence>
<keyword id="KW-0012">Acyltransferase</keyword>
<keyword id="KW-0677">Repeat</keyword>
<keyword id="KW-0808">Transferase</keyword>
<feature type="chain" id="PRO_0000400304" description="Mycothiol acetyltransferase">
    <location>
        <begin position="1"/>
        <end position="307"/>
    </location>
</feature>
<feature type="domain" description="N-acetyltransferase 1" evidence="1">
    <location>
        <begin position="15"/>
        <end position="158"/>
    </location>
</feature>
<feature type="domain" description="N-acetyltransferase 2" evidence="1">
    <location>
        <begin position="164"/>
        <end position="307"/>
    </location>
</feature>
<feature type="binding site" evidence="1">
    <location>
        <position position="46"/>
    </location>
    <ligand>
        <name>1D-myo-inositol 2-(L-cysteinylamino)-2-deoxy-alpha-D-glucopyranoside</name>
        <dbReference type="ChEBI" id="CHEBI:58887"/>
    </ligand>
</feature>
<feature type="binding site" evidence="1">
    <location>
        <begin position="90"/>
        <end position="92"/>
    </location>
    <ligand>
        <name>acetyl-CoA</name>
        <dbReference type="ChEBI" id="CHEBI:57288"/>
        <label>1</label>
    </ligand>
</feature>
<feature type="binding site" evidence="1">
    <location>
        <position position="191"/>
    </location>
    <ligand>
        <name>1D-myo-inositol 2-(L-cysteinylamino)-2-deoxy-alpha-D-glucopyranoside</name>
        <dbReference type="ChEBI" id="CHEBI:58887"/>
    </ligand>
</feature>
<feature type="binding site" evidence="1">
    <location>
        <position position="230"/>
    </location>
    <ligand>
        <name>1D-myo-inositol 2-(L-cysteinylamino)-2-deoxy-alpha-D-glucopyranoside</name>
        <dbReference type="ChEBI" id="CHEBI:58887"/>
    </ligand>
</feature>
<feature type="binding site" evidence="1">
    <location>
        <position position="239"/>
    </location>
    <ligand>
        <name>1D-myo-inositol 2-(L-cysteinylamino)-2-deoxy-alpha-D-glucopyranoside</name>
        <dbReference type="ChEBI" id="CHEBI:58887"/>
    </ligand>
</feature>
<feature type="binding site" evidence="1">
    <location>
        <begin position="243"/>
        <end position="245"/>
    </location>
    <ligand>
        <name>acetyl-CoA</name>
        <dbReference type="ChEBI" id="CHEBI:57288"/>
        <label>2</label>
    </ligand>
</feature>
<feature type="binding site" evidence="1">
    <location>
        <begin position="250"/>
        <end position="256"/>
    </location>
    <ligand>
        <name>acetyl-CoA</name>
        <dbReference type="ChEBI" id="CHEBI:57288"/>
        <label>2</label>
    </ligand>
</feature>
<feature type="binding site" evidence="1">
    <location>
        <position position="277"/>
    </location>
    <ligand>
        <name>1D-myo-inositol 2-(L-cysteinylamino)-2-deoxy-alpha-D-glucopyranoside</name>
        <dbReference type="ChEBI" id="CHEBI:58887"/>
    </ligand>
</feature>
<protein>
    <recommendedName>
        <fullName evidence="1">Mycothiol acetyltransferase</fullName>
        <shortName evidence="1">MSH acetyltransferase</shortName>
        <ecNumber evidence="1">2.3.1.189</ecNumber>
    </recommendedName>
    <alternativeName>
        <fullName evidence="1">Mycothiol synthase</fullName>
    </alternativeName>
</protein>
<gene>
    <name evidence="1" type="primary">mshD</name>
    <name type="ordered locus">SGR_3940</name>
</gene>
<organism>
    <name type="scientific">Streptomyces griseus subsp. griseus (strain JCM 4626 / CBS 651.72 / NBRC 13350 / KCC S-0626 / ISP 5235)</name>
    <dbReference type="NCBI Taxonomy" id="455632"/>
    <lineage>
        <taxon>Bacteria</taxon>
        <taxon>Bacillati</taxon>
        <taxon>Actinomycetota</taxon>
        <taxon>Actinomycetes</taxon>
        <taxon>Kitasatosporales</taxon>
        <taxon>Streptomycetaceae</taxon>
        <taxon>Streptomyces</taxon>
    </lineage>
</organism>
<proteinExistence type="inferred from homology"/>
<comment type="function">
    <text evidence="1">Catalyzes the transfer of acetyl from acetyl-CoA to desacetylmycothiol (Cys-GlcN-Ins) to form mycothiol.</text>
</comment>
<comment type="catalytic activity">
    <reaction evidence="1">
        <text>1D-myo-inositol 2-(L-cysteinylamino)-2-deoxy-alpha-D-glucopyranoside + acetyl-CoA = mycothiol + CoA + H(+)</text>
        <dbReference type="Rhea" id="RHEA:26172"/>
        <dbReference type="ChEBI" id="CHEBI:15378"/>
        <dbReference type="ChEBI" id="CHEBI:16768"/>
        <dbReference type="ChEBI" id="CHEBI:57287"/>
        <dbReference type="ChEBI" id="CHEBI:57288"/>
        <dbReference type="ChEBI" id="CHEBI:58887"/>
        <dbReference type="EC" id="2.3.1.189"/>
    </reaction>
</comment>
<comment type="subunit">
    <text evidence="1">Monomer.</text>
</comment>
<comment type="similarity">
    <text evidence="1">Belongs to the acetyltransferase family. MshD subfamily.</text>
</comment>
<sequence length="307" mass="33187">MTTDAPLPAPGREVHTLDALDSAQAESVLALLSEAARSDGRQAVSEQGRLRIRGGHRDGVRHFLLTVDGALAGYAQLEDTDPVEAPAAELVVHPDRRGHGHGRALGAALLAATGKRLRVWAHGGSSAARHLAQVLGLSLFRELRQLRRSLVPLDLAEPVLPEGVTVRTFEPGRDDAAWLAVNRAAFAHHPEQGSLTQQDLDDRKAEPWFDPKGFFLAERDGEIVGFHWTKVHAEERLGEVYVVGVLPEAQGGGLGKALTSIGLHHLAAEALPTAMLYVDADNTAAVTVYERMGFTTHEVDLMYRTES</sequence>